<name>ICI1_SOLTU</name>
<organism>
    <name type="scientific">Solanum tuberosum</name>
    <name type="common">Potato</name>
    <dbReference type="NCBI Taxonomy" id="4113"/>
    <lineage>
        <taxon>Eukaryota</taxon>
        <taxon>Viridiplantae</taxon>
        <taxon>Streptophyta</taxon>
        <taxon>Embryophyta</taxon>
        <taxon>Tracheophyta</taxon>
        <taxon>Spermatophyta</taxon>
        <taxon>Magnoliopsida</taxon>
        <taxon>eudicotyledons</taxon>
        <taxon>Gunneridae</taxon>
        <taxon>Pentapetalae</taxon>
        <taxon>asterids</taxon>
        <taxon>lamiids</taxon>
        <taxon>Solanales</taxon>
        <taxon>Solanaceae</taxon>
        <taxon>Solanoideae</taxon>
        <taxon>Solaneae</taxon>
        <taxon>Solanum</taxon>
    </lineage>
</organism>
<dbReference type="EMBL" id="Z12611">
    <property type="protein sequence ID" value="CAA78259.1"/>
    <property type="molecule type" value="Genomic_DNA"/>
</dbReference>
<dbReference type="PIR" id="S26717">
    <property type="entry name" value="S26717"/>
</dbReference>
<dbReference type="SMR" id="Q00783"/>
<dbReference type="FunCoup" id="Q00783">
    <property type="interactions" value="25"/>
</dbReference>
<dbReference type="STRING" id="4113.Q00783"/>
<dbReference type="MEROPS" id="I13.006"/>
<dbReference type="InParanoid" id="Q00783"/>
<dbReference type="Proteomes" id="UP000011115">
    <property type="component" value="Unassembled WGS sequence"/>
</dbReference>
<dbReference type="ExpressionAtlas" id="Q00783">
    <property type="expression patterns" value="baseline"/>
</dbReference>
<dbReference type="GO" id="GO:0004867">
    <property type="term" value="F:serine-type endopeptidase inhibitor activity"/>
    <property type="evidence" value="ECO:0007669"/>
    <property type="project" value="UniProtKB-KW"/>
</dbReference>
<dbReference type="GO" id="GO:0009611">
    <property type="term" value="P:response to wounding"/>
    <property type="evidence" value="ECO:0007669"/>
    <property type="project" value="InterPro"/>
</dbReference>
<dbReference type="Gene3D" id="3.30.10.10">
    <property type="entry name" value="Trypsin Inhibitor V, subunit A"/>
    <property type="match status" value="1"/>
</dbReference>
<dbReference type="InterPro" id="IPR000864">
    <property type="entry name" value="Prot_inh_pot1"/>
</dbReference>
<dbReference type="InterPro" id="IPR036354">
    <property type="entry name" value="Prot_inh_pot1_sf"/>
</dbReference>
<dbReference type="PANTHER" id="PTHR33091">
    <property type="entry name" value="PROTEIN, PUTATIVE, EXPRESSED-RELATED"/>
    <property type="match status" value="1"/>
</dbReference>
<dbReference type="PANTHER" id="PTHR33091:SF65">
    <property type="entry name" value="WOUND-INDUCED PROTEINASE INHIBITOR 1"/>
    <property type="match status" value="1"/>
</dbReference>
<dbReference type="Pfam" id="PF00280">
    <property type="entry name" value="potato_inhibit"/>
    <property type="match status" value="1"/>
</dbReference>
<dbReference type="PRINTS" id="PR00292">
    <property type="entry name" value="POTATOINHBTR"/>
</dbReference>
<dbReference type="SUPFAM" id="SSF54654">
    <property type="entry name" value="CI-2 family of serine protease inhibitors"/>
    <property type="match status" value="1"/>
</dbReference>
<dbReference type="PROSITE" id="PS00285">
    <property type="entry name" value="POTATO_INHIBITOR"/>
    <property type="match status" value="1"/>
</dbReference>
<reference key="1">
    <citation type="journal article" date="1989" name="Singmul Hakhoe Chi">
        <title>Nucleotide sequence of a protease inhibitor I gene in potato.</title>
        <authorList>
            <person name="Lee J.S."/>
            <person name="Park J.-S."/>
        </authorList>
    </citation>
    <scope>NUCLEOTIDE SEQUENCE [GENOMIC DNA]</scope>
    <source>
        <strain>cv. Russet Burbank-0</strain>
    </source>
</reference>
<proteinExistence type="inferred from homology"/>
<keyword id="KW-0646">Protease inhibitor</keyword>
<keyword id="KW-1185">Reference proteome</keyword>
<keyword id="KW-0722">Serine protease inhibitor</keyword>
<keyword id="KW-0732">Signal</keyword>
<comment type="similarity">
    <text evidence="2">Belongs to the protease inhibitor I13 (potato type I serine protease inhibitor) family.</text>
</comment>
<accession>Q00783</accession>
<protein>
    <recommendedName>
        <fullName>Proteinase inhibitor 1</fullName>
    </recommendedName>
    <alternativeName>
        <fullName>Proteinase inhibitor I</fullName>
    </alternativeName>
</protein>
<evidence type="ECO:0000250" key="1"/>
<evidence type="ECO:0000305" key="2"/>
<feature type="signal peptide" evidence="1">
    <location>
        <begin position="1"/>
        <end position="23"/>
    </location>
</feature>
<feature type="propeptide" id="PRO_0000025294" evidence="1">
    <location>
        <begin position="24"/>
        <end position="36"/>
    </location>
</feature>
<feature type="chain" id="PRO_0000025295" description="Proteinase inhibitor 1">
    <location>
        <begin position="37"/>
        <end position="107"/>
    </location>
</feature>
<feature type="site" description="Reactive bond" evidence="1">
    <location>
        <begin position="83"/>
        <end position="84"/>
    </location>
</feature>
<sequence>MELKFAHIIVFFLLATSFETLMARKESDGPEVIQLLKEFQCKGKLRWPELIGVPTKLAKGIIEKENSLISNVHILLNGSPVTLDIRCDRVRLFDNILGYVVDIPVVG</sequence>